<sequence length="448" mass="51226">MASRIADSLFAFTGPQQCLPRVPKLAASSARVSPGVYAVKPIDLLLKGRTHRSRRCVAPVKRRIGCIKAVAAPVAPPSADSAEDREQLAESYGFRQIGEDLPENVTLKDIMDTLPKEVFEIDDLKALKSVLISVTSYTLGLFMIAKSPWYLLPLAWAWTGTAITGFFVIGHDCAHKSFSKNKLVEDIVGTLAFLPLVYPYEPWRFKHDRHHAKTNMLVHDTAWQPVPPEEFESSPVMRKAIIFGYGPIRPWLSIAHWVNWHFNLKKFRASEVNRVKISLACVFAFMAVGWPLIVYKVGILGWVKFWLMPWLGYHFWMSTFTMVHHTAPHIPFKPADEWNAAQAQLNGTVHCDYPSWIEILCHDINVHIPHHISPRIPSYNLRAAHESIQENWGKYTNLATWNWRLMKTIMTVCHVYDKEENYIPFDRLAPEESQPITFLKKAMPNYTA</sequence>
<name>FAD6C_ARATH</name>
<accession>P46312</accession>
<accession>Q9M094</accession>
<evidence type="ECO:0000255" key="1"/>
<evidence type="ECO:0000269" key="2">
    <source>
    </source>
</evidence>
<evidence type="ECO:0000269" key="3">
    <source>
    </source>
</evidence>
<evidence type="ECO:0000269" key="4">
    <source>
    </source>
</evidence>
<evidence type="ECO:0000303" key="5">
    <source>
    </source>
</evidence>
<evidence type="ECO:0000305" key="6"/>
<evidence type="ECO:0000312" key="7">
    <source>
        <dbReference type="Araport" id="AT4G30950"/>
    </source>
</evidence>
<evidence type="ECO:0000312" key="8">
    <source>
        <dbReference type="EMBL" id="CAA18198.1"/>
    </source>
</evidence>
<evidence type="ECO:0007744" key="9">
    <source>
    </source>
</evidence>
<comment type="function">
    <text evidence="4">Chloroplast omega-6 fatty acid desaturase introduces the second double bond in the biosynthesis of 16:3 and 18:3 fatty acids, important constituents of plant membranes. It is thought to use ferredoxin as an electron donor and to act on fatty acids esterified to galactolipids, sulfolipids and phosphatidylglycerol.</text>
</comment>
<comment type="catalytic activity">
    <reaction evidence="4">
        <text>a (9Z)-octadecenoyl-containing glycerolipid + 2 reduced [2Fe-2S]-[ferredoxin] + O2 + 2 H(+) = a (9Z,12Z)-octadecadienoyl-containing glycerolipid + 2 oxidized [2Fe-2S]-[ferredoxin] + 2 H2O</text>
        <dbReference type="Rhea" id="RHEA:46376"/>
        <dbReference type="Rhea" id="RHEA-COMP:10000"/>
        <dbReference type="Rhea" id="RHEA-COMP:10001"/>
        <dbReference type="ChEBI" id="CHEBI:15377"/>
        <dbReference type="ChEBI" id="CHEBI:15378"/>
        <dbReference type="ChEBI" id="CHEBI:15379"/>
        <dbReference type="ChEBI" id="CHEBI:33737"/>
        <dbReference type="ChEBI" id="CHEBI:33738"/>
        <dbReference type="ChEBI" id="CHEBI:88240"/>
        <dbReference type="ChEBI" id="CHEBI:88351"/>
        <dbReference type="EC" id="1.14.19.23"/>
    </reaction>
</comment>
<comment type="pathway">
    <text>Lipid metabolism; polyunsaturated fatty acid biosynthesis.</text>
</comment>
<comment type="subcellular location">
    <subcellularLocation>
        <location evidence="2">Plastid</location>
        <location evidence="2">Chloroplast inner membrane</location>
        <topology evidence="1">Multi-pass membrane protein</topology>
    </subcellularLocation>
</comment>
<comment type="developmental stage">
    <text evidence="4">Highest levels found in expanding leaves.</text>
</comment>
<comment type="domain">
    <text evidence="6">The histidine box domains may contain the active site and/or be involved in metal ion binding.</text>
</comment>
<comment type="similarity">
    <text evidence="6">Belongs to the fatty acid desaturase type 1 family.</text>
</comment>
<proteinExistence type="evidence at protein level"/>
<gene>
    <name evidence="5" type="primary">FAD6</name>
    <name evidence="5" type="synonym">FADC</name>
    <name evidence="7" type="ordered locus">At4g30950</name>
    <name evidence="8" type="ORF">F6I18.140</name>
</gene>
<protein>
    <recommendedName>
        <fullName evidence="5">Omega-6 fatty acid desaturase, chloroplastic</fullName>
        <ecNumber evidence="4">1.14.19.23</ecNumber>
    </recommendedName>
</protein>
<dbReference type="EC" id="1.14.19.23" evidence="4"/>
<dbReference type="EMBL" id="AL022198">
    <property type="protein sequence ID" value="CAA18198.1"/>
    <property type="molecule type" value="Genomic_DNA"/>
</dbReference>
<dbReference type="EMBL" id="AL161578">
    <property type="protein sequence ID" value="CAB79813.1"/>
    <property type="molecule type" value="Genomic_DNA"/>
</dbReference>
<dbReference type="EMBL" id="CP002687">
    <property type="protein sequence ID" value="AEE85834.1"/>
    <property type="molecule type" value="Genomic_DNA"/>
</dbReference>
<dbReference type="EMBL" id="AY045621">
    <property type="protein sequence ID" value="AAK73979.1"/>
    <property type="molecule type" value="mRNA"/>
</dbReference>
<dbReference type="EMBL" id="AY058078">
    <property type="protein sequence ID" value="AAL24186.1"/>
    <property type="molecule type" value="mRNA"/>
</dbReference>
<dbReference type="EMBL" id="AY079039">
    <property type="protein sequence ID" value="AAL79589.1"/>
    <property type="molecule type" value="mRNA"/>
</dbReference>
<dbReference type="EMBL" id="AY058852">
    <property type="protein sequence ID" value="AAL24240.1"/>
    <property type="molecule type" value="mRNA"/>
</dbReference>
<dbReference type="EMBL" id="AY088002">
    <property type="protein sequence ID" value="AAM65548.1"/>
    <property type="molecule type" value="mRNA"/>
</dbReference>
<dbReference type="EMBL" id="U09503">
    <property type="protein sequence ID" value="AAA92800.1"/>
    <property type="molecule type" value="mRNA"/>
</dbReference>
<dbReference type="PIR" id="D85362">
    <property type="entry name" value="D85362"/>
</dbReference>
<dbReference type="RefSeq" id="NP_194824.1">
    <property type="nucleotide sequence ID" value="NM_119243.4"/>
</dbReference>
<dbReference type="SMR" id="P46312"/>
<dbReference type="BioGRID" id="14507">
    <property type="interactions" value="4"/>
</dbReference>
<dbReference type="FunCoup" id="P46312">
    <property type="interactions" value="1014"/>
</dbReference>
<dbReference type="IntAct" id="P46312">
    <property type="interactions" value="1"/>
</dbReference>
<dbReference type="STRING" id="3702.P46312"/>
<dbReference type="iPTMnet" id="P46312"/>
<dbReference type="PaxDb" id="3702-AT4G30950.1"/>
<dbReference type="ProteomicsDB" id="222374"/>
<dbReference type="EnsemblPlants" id="AT4G30950.1">
    <property type="protein sequence ID" value="AT4G30950.1"/>
    <property type="gene ID" value="AT4G30950"/>
</dbReference>
<dbReference type="GeneID" id="829220"/>
<dbReference type="Gramene" id="AT4G30950.1">
    <property type="protein sequence ID" value="AT4G30950.1"/>
    <property type="gene ID" value="AT4G30950"/>
</dbReference>
<dbReference type="KEGG" id="ath:AT4G30950"/>
<dbReference type="Araport" id="AT4G30950"/>
<dbReference type="TAIR" id="AT4G30950">
    <property type="gene designation" value="FAD6"/>
</dbReference>
<dbReference type="eggNOG" id="ENOG502QQPI">
    <property type="taxonomic scope" value="Eukaryota"/>
</dbReference>
<dbReference type="HOGENOM" id="CLU_033094_3_0_1"/>
<dbReference type="InParanoid" id="P46312"/>
<dbReference type="OMA" id="CGHRSFA"/>
<dbReference type="OrthoDB" id="10260134at2759"/>
<dbReference type="PhylomeDB" id="P46312"/>
<dbReference type="BioCyc" id="MetaCyc:AT4G30950-MONOMER"/>
<dbReference type="BRENDA" id="1.14.19.23">
    <property type="organism ID" value="399"/>
</dbReference>
<dbReference type="UniPathway" id="UPA00658"/>
<dbReference type="PRO" id="PR:P46312"/>
<dbReference type="Proteomes" id="UP000006548">
    <property type="component" value="Chromosome 4"/>
</dbReference>
<dbReference type="ExpressionAtlas" id="P46312">
    <property type="expression patterns" value="baseline and differential"/>
</dbReference>
<dbReference type="GO" id="GO:0009507">
    <property type="term" value="C:chloroplast"/>
    <property type="evidence" value="ECO:0007005"/>
    <property type="project" value="TAIR"/>
</dbReference>
<dbReference type="GO" id="GO:0009941">
    <property type="term" value="C:chloroplast envelope"/>
    <property type="evidence" value="ECO:0007005"/>
    <property type="project" value="TAIR"/>
</dbReference>
<dbReference type="GO" id="GO:0009706">
    <property type="term" value="C:chloroplast inner membrane"/>
    <property type="evidence" value="ECO:0007669"/>
    <property type="project" value="UniProtKB-SubCell"/>
</dbReference>
<dbReference type="GO" id="GO:0005886">
    <property type="term" value="C:plasma membrane"/>
    <property type="evidence" value="ECO:0007005"/>
    <property type="project" value="TAIR"/>
</dbReference>
<dbReference type="GO" id="GO:0102850">
    <property type="term" value="F:acyl-lipid (n+3)-(Z)-desaturase (ferredoxin) activity"/>
    <property type="evidence" value="ECO:0007669"/>
    <property type="project" value="UniProtKB-EC"/>
</dbReference>
<dbReference type="GO" id="GO:0019904">
    <property type="term" value="F:protein domain specific binding"/>
    <property type="evidence" value="ECO:0000353"/>
    <property type="project" value="CAFA"/>
</dbReference>
<dbReference type="GO" id="GO:0006633">
    <property type="term" value="P:fatty acid biosynthetic process"/>
    <property type="evidence" value="ECO:0000304"/>
    <property type="project" value="TAIR"/>
</dbReference>
<dbReference type="GO" id="GO:0010205">
    <property type="term" value="P:photoinhibition"/>
    <property type="evidence" value="ECO:0000315"/>
    <property type="project" value="TAIR"/>
</dbReference>
<dbReference type="GO" id="GO:0006636">
    <property type="term" value="P:unsaturated fatty acid biosynthetic process"/>
    <property type="evidence" value="ECO:0007669"/>
    <property type="project" value="UniProtKB-UniPathway"/>
</dbReference>
<dbReference type="CDD" id="cd03507">
    <property type="entry name" value="Delta12-FADS-like"/>
    <property type="match status" value="1"/>
</dbReference>
<dbReference type="InterPro" id="IPR005804">
    <property type="entry name" value="FA_desaturase_dom"/>
</dbReference>
<dbReference type="InterPro" id="IPR012171">
    <property type="entry name" value="Fatty_acid_desaturase"/>
</dbReference>
<dbReference type="PANTHER" id="PTHR32100">
    <property type="entry name" value="OMEGA-6 FATTY ACID DESATURASE, CHLOROPLASTIC"/>
    <property type="match status" value="1"/>
</dbReference>
<dbReference type="Pfam" id="PF00487">
    <property type="entry name" value="FA_desaturase"/>
    <property type="match status" value="1"/>
</dbReference>
<reference key="1">
    <citation type="journal article" date="1999" name="Nature">
        <title>Sequence and analysis of chromosome 4 of the plant Arabidopsis thaliana.</title>
        <authorList>
            <person name="Mayer K.F.X."/>
            <person name="Schueller C."/>
            <person name="Wambutt R."/>
            <person name="Murphy G."/>
            <person name="Volckaert G."/>
            <person name="Pohl T."/>
            <person name="Duesterhoeft A."/>
            <person name="Stiekema W."/>
            <person name="Entian K.-D."/>
            <person name="Terryn N."/>
            <person name="Harris B."/>
            <person name="Ansorge W."/>
            <person name="Brandt P."/>
            <person name="Grivell L.A."/>
            <person name="Rieger M."/>
            <person name="Weichselgartner M."/>
            <person name="de Simone V."/>
            <person name="Obermaier B."/>
            <person name="Mache R."/>
            <person name="Mueller M."/>
            <person name="Kreis M."/>
            <person name="Delseny M."/>
            <person name="Puigdomenech P."/>
            <person name="Watson M."/>
            <person name="Schmidtheini T."/>
            <person name="Reichert B."/>
            <person name="Portetelle D."/>
            <person name="Perez-Alonso M."/>
            <person name="Boutry M."/>
            <person name="Bancroft I."/>
            <person name="Vos P."/>
            <person name="Hoheisel J."/>
            <person name="Zimmermann W."/>
            <person name="Wedler H."/>
            <person name="Ridley P."/>
            <person name="Langham S.-A."/>
            <person name="McCullagh B."/>
            <person name="Bilham L."/>
            <person name="Robben J."/>
            <person name="van der Schueren J."/>
            <person name="Grymonprez B."/>
            <person name="Chuang Y.-J."/>
            <person name="Vandenbussche F."/>
            <person name="Braeken M."/>
            <person name="Weltjens I."/>
            <person name="Voet M."/>
            <person name="Bastiaens I."/>
            <person name="Aert R."/>
            <person name="Defoor E."/>
            <person name="Weitzenegger T."/>
            <person name="Bothe G."/>
            <person name="Ramsperger U."/>
            <person name="Hilbert H."/>
            <person name="Braun M."/>
            <person name="Holzer E."/>
            <person name="Brandt A."/>
            <person name="Peters S."/>
            <person name="van Staveren M."/>
            <person name="Dirkse W."/>
            <person name="Mooijman P."/>
            <person name="Klein Lankhorst R."/>
            <person name="Rose M."/>
            <person name="Hauf J."/>
            <person name="Koetter P."/>
            <person name="Berneiser S."/>
            <person name="Hempel S."/>
            <person name="Feldpausch M."/>
            <person name="Lamberth S."/>
            <person name="Van den Daele H."/>
            <person name="De Keyser A."/>
            <person name="Buysshaert C."/>
            <person name="Gielen J."/>
            <person name="Villarroel R."/>
            <person name="De Clercq R."/>
            <person name="van Montagu M."/>
            <person name="Rogers J."/>
            <person name="Cronin A."/>
            <person name="Quail M.A."/>
            <person name="Bray-Allen S."/>
            <person name="Clark L."/>
            <person name="Doggett J."/>
            <person name="Hall S."/>
            <person name="Kay M."/>
            <person name="Lennard N."/>
            <person name="McLay K."/>
            <person name="Mayes R."/>
            <person name="Pettett A."/>
            <person name="Rajandream M.A."/>
            <person name="Lyne M."/>
            <person name="Benes V."/>
            <person name="Rechmann S."/>
            <person name="Borkova D."/>
            <person name="Bloecker H."/>
            <person name="Scharfe M."/>
            <person name="Grimm M."/>
            <person name="Loehnert T.-H."/>
            <person name="Dose S."/>
            <person name="de Haan M."/>
            <person name="Maarse A.C."/>
            <person name="Schaefer M."/>
            <person name="Mueller-Auer S."/>
            <person name="Gabel C."/>
            <person name="Fuchs M."/>
            <person name="Fartmann B."/>
            <person name="Granderath K."/>
            <person name="Dauner D."/>
            <person name="Herzl A."/>
            <person name="Neumann S."/>
            <person name="Argiriou A."/>
            <person name="Vitale D."/>
            <person name="Liguori R."/>
            <person name="Piravandi E."/>
            <person name="Massenet O."/>
            <person name="Quigley F."/>
            <person name="Clabauld G."/>
            <person name="Muendlein A."/>
            <person name="Felber R."/>
            <person name="Schnabl S."/>
            <person name="Hiller R."/>
            <person name="Schmidt W."/>
            <person name="Lecharny A."/>
            <person name="Aubourg S."/>
            <person name="Chefdor F."/>
            <person name="Cooke R."/>
            <person name="Berger C."/>
            <person name="Monfort A."/>
            <person name="Casacuberta E."/>
            <person name="Gibbons T."/>
            <person name="Weber N."/>
            <person name="Vandenbol M."/>
            <person name="Bargues M."/>
            <person name="Terol J."/>
            <person name="Torres A."/>
            <person name="Perez-Perez A."/>
            <person name="Purnelle B."/>
            <person name="Bent E."/>
            <person name="Johnson S."/>
            <person name="Tacon D."/>
            <person name="Jesse T."/>
            <person name="Heijnen L."/>
            <person name="Schwarz S."/>
            <person name="Scholler P."/>
            <person name="Heber S."/>
            <person name="Francs P."/>
            <person name="Bielke C."/>
            <person name="Frishman D."/>
            <person name="Haase D."/>
            <person name="Lemcke K."/>
            <person name="Mewes H.-W."/>
            <person name="Stocker S."/>
            <person name="Zaccaria P."/>
            <person name="Bevan M."/>
            <person name="Wilson R.K."/>
            <person name="de la Bastide M."/>
            <person name="Habermann K."/>
            <person name="Parnell L."/>
            <person name="Dedhia N."/>
            <person name="Gnoj L."/>
            <person name="Schutz K."/>
            <person name="Huang E."/>
            <person name="Spiegel L."/>
            <person name="Sekhon M."/>
            <person name="Murray J."/>
            <person name="Sheet P."/>
            <person name="Cordes M."/>
            <person name="Abu-Threideh J."/>
            <person name="Stoneking T."/>
            <person name="Kalicki J."/>
            <person name="Graves T."/>
            <person name="Harmon G."/>
            <person name="Edwards J."/>
            <person name="Latreille P."/>
            <person name="Courtney L."/>
            <person name="Cloud J."/>
            <person name="Abbott A."/>
            <person name="Scott K."/>
            <person name="Johnson D."/>
            <person name="Minx P."/>
            <person name="Bentley D."/>
            <person name="Fulton B."/>
            <person name="Miller N."/>
            <person name="Greco T."/>
            <person name="Kemp K."/>
            <person name="Kramer J."/>
            <person name="Fulton L."/>
            <person name="Mardis E."/>
            <person name="Dante M."/>
            <person name="Pepin K."/>
            <person name="Hillier L.W."/>
            <person name="Nelson J."/>
            <person name="Spieth J."/>
            <person name="Ryan E."/>
            <person name="Andrews S."/>
            <person name="Geisel C."/>
            <person name="Layman D."/>
            <person name="Du H."/>
            <person name="Ali J."/>
            <person name="Berghoff A."/>
            <person name="Jones K."/>
            <person name="Drone K."/>
            <person name="Cotton M."/>
            <person name="Joshu C."/>
            <person name="Antonoiu B."/>
            <person name="Zidanic M."/>
            <person name="Strong C."/>
            <person name="Sun H."/>
            <person name="Lamar B."/>
            <person name="Yordan C."/>
            <person name="Ma P."/>
            <person name="Zhong J."/>
            <person name="Preston R."/>
            <person name="Vil D."/>
            <person name="Shekher M."/>
            <person name="Matero A."/>
            <person name="Shah R."/>
            <person name="Swaby I.K."/>
            <person name="O'Shaughnessy A."/>
            <person name="Rodriguez M."/>
            <person name="Hoffman J."/>
            <person name="Till S."/>
            <person name="Granat S."/>
            <person name="Shohdy N."/>
            <person name="Hasegawa A."/>
            <person name="Hameed A."/>
            <person name="Lodhi M."/>
            <person name="Johnson A."/>
            <person name="Chen E."/>
            <person name="Marra M.A."/>
            <person name="Martienssen R."/>
            <person name="McCombie W.R."/>
        </authorList>
    </citation>
    <scope>NUCLEOTIDE SEQUENCE [LARGE SCALE GENOMIC DNA]</scope>
    <source>
        <strain>cv. Columbia</strain>
    </source>
</reference>
<reference key="2">
    <citation type="journal article" date="2017" name="Plant J.">
        <title>Araport11: a complete reannotation of the Arabidopsis thaliana reference genome.</title>
        <authorList>
            <person name="Cheng C.Y."/>
            <person name="Krishnakumar V."/>
            <person name="Chan A.P."/>
            <person name="Thibaud-Nissen F."/>
            <person name="Schobel S."/>
            <person name="Town C.D."/>
        </authorList>
    </citation>
    <scope>GENOME REANNOTATION</scope>
    <source>
        <strain>cv. Columbia</strain>
    </source>
</reference>
<reference key="3">
    <citation type="journal article" date="2003" name="Science">
        <title>Empirical analysis of transcriptional activity in the Arabidopsis genome.</title>
        <authorList>
            <person name="Yamada K."/>
            <person name="Lim J."/>
            <person name="Dale J.M."/>
            <person name="Chen H."/>
            <person name="Shinn P."/>
            <person name="Palm C.J."/>
            <person name="Southwick A.M."/>
            <person name="Wu H.C."/>
            <person name="Kim C.J."/>
            <person name="Nguyen M."/>
            <person name="Pham P.K."/>
            <person name="Cheuk R.F."/>
            <person name="Karlin-Newmann G."/>
            <person name="Liu S.X."/>
            <person name="Lam B."/>
            <person name="Sakano H."/>
            <person name="Wu T."/>
            <person name="Yu G."/>
            <person name="Miranda M."/>
            <person name="Quach H.L."/>
            <person name="Tripp M."/>
            <person name="Chang C.H."/>
            <person name="Lee J.M."/>
            <person name="Toriumi M.J."/>
            <person name="Chan M.M."/>
            <person name="Tang C.C."/>
            <person name="Onodera C.S."/>
            <person name="Deng J.M."/>
            <person name="Akiyama K."/>
            <person name="Ansari Y."/>
            <person name="Arakawa T."/>
            <person name="Banh J."/>
            <person name="Banno F."/>
            <person name="Bowser L."/>
            <person name="Brooks S.Y."/>
            <person name="Carninci P."/>
            <person name="Chao Q."/>
            <person name="Choy N."/>
            <person name="Enju A."/>
            <person name="Goldsmith A.D."/>
            <person name="Gurjal M."/>
            <person name="Hansen N.F."/>
            <person name="Hayashizaki Y."/>
            <person name="Johnson-Hopson C."/>
            <person name="Hsuan V.W."/>
            <person name="Iida K."/>
            <person name="Karnes M."/>
            <person name="Khan S."/>
            <person name="Koesema E."/>
            <person name="Ishida J."/>
            <person name="Jiang P.X."/>
            <person name="Jones T."/>
            <person name="Kawai J."/>
            <person name="Kamiya A."/>
            <person name="Meyers C."/>
            <person name="Nakajima M."/>
            <person name="Narusaka M."/>
            <person name="Seki M."/>
            <person name="Sakurai T."/>
            <person name="Satou M."/>
            <person name="Tamse R."/>
            <person name="Vaysberg M."/>
            <person name="Wallender E.K."/>
            <person name="Wong C."/>
            <person name="Yamamura Y."/>
            <person name="Yuan S."/>
            <person name="Shinozaki K."/>
            <person name="Davis R.W."/>
            <person name="Theologis A."/>
            <person name="Ecker J.R."/>
        </authorList>
    </citation>
    <scope>NUCLEOTIDE SEQUENCE [LARGE SCALE MRNA]</scope>
    <source>
        <strain>cv. Columbia</strain>
    </source>
</reference>
<reference key="4">
    <citation type="submission" date="2002-03" db="EMBL/GenBank/DDBJ databases">
        <title>Full-length cDNA from Arabidopsis thaliana.</title>
        <authorList>
            <person name="Brover V.V."/>
            <person name="Troukhan M.E."/>
            <person name="Alexandrov N.A."/>
            <person name="Lu Y.-P."/>
            <person name="Flavell R.B."/>
            <person name="Feldmann K.A."/>
        </authorList>
    </citation>
    <scope>NUCLEOTIDE SEQUENCE [LARGE SCALE MRNA]</scope>
</reference>
<reference key="5">
    <citation type="journal article" date="1994" name="Plant Physiol.">
        <title>Identification of a gene that complements an Arabidopsis mutant deficient in chloroplast omega 6 desaturase activity.</title>
        <authorList>
            <person name="Falcone D.L."/>
            <person name="Gibson S."/>
            <person name="Lemieux B."/>
            <person name="Somerville C.R."/>
        </authorList>
    </citation>
    <scope>NUCLEOTIDE SEQUENCE [MRNA] OF 1-418</scope>
    <scope>FUNCTION</scope>
    <scope>CATALYTIC ACTIVITY</scope>
    <scope>DEVELOPMENTAL STAGE</scope>
    <source>
        <strain>cv. Columbia</strain>
    </source>
</reference>
<reference key="6">
    <citation type="journal article" date="2003" name="Mol. Cell. Proteomics">
        <title>Proteomics of the chloroplast envelope membranes from Arabidopsis thaliana.</title>
        <authorList>
            <person name="Ferro M."/>
            <person name="Salvi D."/>
            <person name="Brugiere S."/>
            <person name="Miras S."/>
            <person name="Kowalski S."/>
            <person name="Louwagie M."/>
            <person name="Garin J."/>
            <person name="Joyard J."/>
            <person name="Rolland N."/>
        </authorList>
    </citation>
    <scope>IDENTIFICATION BY MASS SPECTROMETRY</scope>
    <scope>SUBCELLULAR LOCATION [LARGE SCALE ANALYSIS]</scope>
    <source>
        <strain>cv. Wassilewskija</strain>
    </source>
</reference>
<reference key="7">
    <citation type="journal article" date="2010" name="Plant Cell Physiol.">
        <title>Lipid transport mediated by Arabidopsis TGD proteins is unidirectional from the endoplasmic reticulum to the plastid.</title>
        <authorList>
            <person name="Xu C."/>
            <person name="Moellering E.R."/>
            <person name="Muthan B."/>
            <person name="Fan J."/>
            <person name="Benning C."/>
        </authorList>
    </citation>
    <scope>MUTAGENESIS OF PRO-225</scope>
</reference>
<reference key="8">
    <citation type="journal article" date="2012" name="Mol. Cell. Proteomics">
        <title>Comparative large-scale characterisation of plant vs. mammal proteins reveals similar and idiosyncratic N-alpha acetylation features.</title>
        <authorList>
            <person name="Bienvenut W.V."/>
            <person name="Sumpton D."/>
            <person name="Martinez A."/>
            <person name="Lilla S."/>
            <person name="Espagne C."/>
            <person name="Meinnel T."/>
            <person name="Giglione C."/>
        </authorList>
    </citation>
    <scope>ACETYLATION [LARGE SCALE ANALYSIS] AT VAL-70</scope>
    <scope>CLEAVAGE OF TRANSIT PEPTIDE [LARGE SCALE ANALYSIS] AFTER ALA-69</scope>
    <scope>IDENTIFICATION BY MASS SPECTROMETRY [LARGE SCALE ANALYSIS]</scope>
</reference>
<organism>
    <name type="scientific">Arabidopsis thaliana</name>
    <name type="common">Mouse-ear cress</name>
    <dbReference type="NCBI Taxonomy" id="3702"/>
    <lineage>
        <taxon>Eukaryota</taxon>
        <taxon>Viridiplantae</taxon>
        <taxon>Streptophyta</taxon>
        <taxon>Embryophyta</taxon>
        <taxon>Tracheophyta</taxon>
        <taxon>Spermatophyta</taxon>
        <taxon>Magnoliopsida</taxon>
        <taxon>eudicotyledons</taxon>
        <taxon>Gunneridae</taxon>
        <taxon>Pentapetalae</taxon>
        <taxon>rosids</taxon>
        <taxon>malvids</taxon>
        <taxon>Brassicales</taxon>
        <taxon>Brassicaceae</taxon>
        <taxon>Camelineae</taxon>
        <taxon>Arabidopsis</taxon>
    </lineage>
</organism>
<keyword id="KW-0007">Acetylation</keyword>
<keyword id="KW-0150">Chloroplast</keyword>
<keyword id="KW-0275">Fatty acid biosynthesis</keyword>
<keyword id="KW-0276">Fatty acid metabolism</keyword>
<keyword id="KW-0444">Lipid biosynthesis</keyword>
<keyword id="KW-0443">Lipid metabolism</keyword>
<keyword id="KW-0472">Membrane</keyword>
<keyword id="KW-0560">Oxidoreductase</keyword>
<keyword id="KW-0934">Plastid</keyword>
<keyword id="KW-1001">Plastid inner membrane</keyword>
<keyword id="KW-1185">Reference proteome</keyword>
<keyword id="KW-0809">Transit peptide</keyword>
<keyword id="KW-0812">Transmembrane</keyword>
<keyword id="KW-1133">Transmembrane helix</keyword>
<feature type="transit peptide" description="Chloroplast" evidence="9">
    <location>
        <begin position="1"/>
        <end position="69"/>
    </location>
</feature>
<feature type="chain" id="PRO_0000007123" description="Omega-6 fatty acid desaturase, chloroplastic">
    <location>
        <begin position="70"/>
        <end position="448"/>
    </location>
</feature>
<feature type="transmembrane region" description="Helical" evidence="1">
    <location>
        <begin position="124"/>
        <end position="144"/>
    </location>
</feature>
<feature type="transmembrane region" description="Helical" evidence="1">
    <location>
        <begin position="149"/>
        <end position="169"/>
    </location>
</feature>
<feature type="transmembrane region" description="Helical" evidence="1">
    <location>
        <begin position="282"/>
        <end position="302"/>
    </location>
</feature>
<feature type="transmembrane region" description="Helical" evidence="1">
    <location>
        <begin position="303"/>
        <end position="323"/>
    </location>
</feature>
<feature type="short sequence motif" description="Histidine box-1" evidence="6">
    <location>
        <begin position="171"/>
        <end position="175"/>
    </location>
</feature>
<feature type="short sequence motif" description="Histidine box-2" evidence="6">
    <location>
        <begin position="207"/>
        <end position="211"/>
    </location>
</feature>
<feature type="short sequence motif" description="Histidine box-3" evidence="6">
    <location>
        <begin position="367"/>
        <end position="371"/>
    </location>
</feature>
<feature type="modified residue" description="N-acetylvaline" evidence="9">
    <location>
        <position position="70"/>
    </location>
</feature>
<feature type="mutagenesis site" description="In fad6-2; loss of function, but no visible phenotype under normal growth conditions." evidence="3">
    <original>P</original>
    <variation>S</variation>
    <location>
        <position position="225"/>
    </location>
</feature>